<name>MSRQ_ECOHS</name>
<feature type="chain" id="PRO_1000085527" description="Protein-methionine-sulfoxide reductase heme-binding subunit MsrQ">
    <location>
        <begin position="1"/>
        <end position="211"/>
    </location>
</feature>
<feature type="transmembrane region" description="Helical" evidence="1">
    <location>
        <begin position="17"/>
        <end position="37"/>
    </location>
</feature>
<feature type="transmembrane region" description="Helical" evidence="1">
    <location>
        <begin position="82"/>
        <end position="102"/>
    </location>
</feature>
<feature type="transmembrane region" description="Helical" evidence="1">
    <location>
        <begin position="116"/>
        <end position="136"/>
    </location>
</feature>
<feature type="transmembrane region" description="Helical" evidence="1">
    <location>
        <begin position="153"/>
        <end position="173"/>
    </location>
</feature>
<reference key="1">
    <citation type="journal article" date="2008" name="J. Bacteriol.">
        <title>The pangenome structure of Escherichia coli: comparative genomic analysis of E. coli commensal and pathogenic isolates.</title>
        <authorList>
            <person name="Rasko D.A."/>
            <person name="Rosovitz M.J."/>
            <person name="Myers G.S.A."/>
            <person name="Mongodin E.F."/>
            <person name="Fricke W.F."/>
            <person name="Gajer P."/>
            <person name="Crabtree J."/>
            <person name="Sebaihia M."/>
            <person name="Thomson N.R."/>
            <person name="Chaudhuri R."/>
            <person name="Henderson I.R."/>
            <person name="Sperandio V."/>
            <person name="Ravel J."/>
        </authorList>
    </citation>
    <scope>NUCLEOTIDE SEQUENCE [LARGE SCALE GENOMIC DNA]</scope>
    <source>
        <strain>HS</strain>
    </source>
</reference>
<organism>
    <name type="scientific">Escherichia coli O9:H4 (strain HS)</name>
    <dbReference type="NCBI Taxonomy" id="331112"/>
    <lineage>
        <taxon>Bacteria</taxon>
        <taxon>Pseudomonadati</taxon>
        <taxon>Pseudomonadota</taxon>
        <taxon>Gammaproteobacteria</taxon>
        <taxon>Enterobacterales</taxon>
        <taxon>Enterobacteriaceae</taxon>
        <taxon>Escherichia</taxon>
    </lineage>
</organism>
<proteinExistence type="inferred from homology"/>
<accession>A8A1H1</accession>
<dbReference type="EMBL" id="CP000802">
    <property type="protein sequence ID" value="ABV06375.1"/>
    <property type="molecule type" value="Genomic_DNA"/>
</dbReference>
<dbReference type="RefSeq" id="WP_001240105.1">
    <property type="nucleotide sequence ID" value="NC_009800.1"/>
</dbReference>
<dbReference type="SMR" id="A8A1H1"/>
<dbReference type="GeneID" id="75205790"/>
<dbReference type="KEGG" id="ecx:EcHS_A2073"/>
<dbReference type="HOGENOM" id="CLU_080662_1_0_6"/>
<dbReference type="GO" id="GO:0005886">
    <property type="term" value="C:plasma membrane"/>
    <property type="evidence" value="ECO:0007669"/>
    <property type="project" value="UniProtKB-SubCell"/>
</dbReference>
<dbReference type="GO" id="GO:0009055">
    <property type="term" value="F:electron transfer activity"/>
    <property type="evidence" value="ECO:0007669"/>
    <property type="project" value="UniProtKB-UniRule"/>
</dbReference>
<dbReference type="GO" id="GO:0010181">
    <property type="term" value="F:FMN binding"/>
    <property type="evidence" value="ECO:0007669"/>
    <property type="project" value="UniProtKB-UniRule"/>
</dbReference>
<dbReference type="GO" id="GO:0020037">
    <property type="term" value="F:heme binding"/>
    <property type="evidence" value="ECO:0007669"/>
    <property type="project" value="UniProtKB-UniRule"/>
</dbReference>
<dbReference type="GO" id="GO:0046872">
    <property type="term" value="F:metal ion binding"/>
    <property type="evidence" value="ECO:0007669"/>
    <property type="project" value="UniProtKB-KW"/>
</dbReference>
<dbReference type="GO" id="GO:0016679">
    <property type="term" value="F:oxidoreductase activity, acting on diphenols and related substances as donors"/>
    <property type="evidence" value="ECO:0007669"/>
    <property type="project" value="TreeGrafter"/>
</dbReference>
<dbReference type="GO" id="GO:0030091">
    <property type="term" value="P:protein repair"/>
    <property type="evidence" value="ECO:0007669"/>
    <property type="project" value="UniProtKB-UniRule"/>
</dbReference>
<dbReference type="HAMAP" id="MF_01207">
    <property type="entry name" value="MsrQ"/>
    <property type="match status" value="1"/>
</dbReference>
<dbReference type="InterPro" id="IPR013130">
    <property type="entry name" value="Fe3_Rdtase_TM_dom"/>
</dbReference>
<dbReference type="InterPro" id="IPR022837">
    <property type="entry name" value="MsrQ-like"/>
</dbReference>
<dbReference type="NCBIfam" id="NF003830">
    <property type="entry name" value="PRK05419.1-1"/>
    <property type="match status" value="1"/>
</dbReference>
<dbReference type="NCBIfam" id="NF003831">
    <property type="entry name" value="PRK05419.1-2"/>
    <property type="match status" value="1"/>
</dbReference>
<dbReference type="NCBIfam" id="NF003832">
    <property type="entry name" value="PRK05419.1-4"/>
    <property type="match status" value="1"/>
</dbReference>
<dbReference type="PANTHER" id="PTHR36964">
    <property type="entry name" value="PROTEIN-METHIONINE-SULFOXIDE REDUCTASE HEME-BINDING SUBUNIT MSRQ"/>
    <property type="match status" value="1"/>
</dbReference>
<dbReference type="PANTHER" id="PTHR36964:SF1">
    <property type="entry name" value="PROTEIN-METHIONINE-SULFOXIDE REDUCTASE HEME-BINDING SUBUNIT MSRQ"/>
    <property type="match status" value="1"/>
</dbReference>
<dbReference type="Pfam" id="PF01794">
    <property type="entry name" value="Ferric_reduct"/>
    <property type="match status" value="1"/>
</dbReference>
<keyword id="KW-0997">Cell inner membrane</keyword>
<keyword id="KW-1003">Cell membrane</keyword>
<keyword id="KW-0249">Electron transport</keyword>
<keyword id="KW-0285">Flavoprotein</keyword>
<keyword id="KW-0288">FMN</keyword>
<keyword id="KW-0349">Heme</keyword>
<keyword id="KW-0408">Iron</keyword>
<keyword id="KW-0472">Membrane</keyword>
<keyword id="KW-0479">Metal-binding</keyword>
<keyword id="KW-0812">Transmembrane</keyword>
<keyword id="KW-1133">Transmembrane helix</keyword>
<keyword id="KW-0813">Transport</keyword>
<comment type="function">
    <text evidence="1">Part of the MsrPQ system that repairs oxidized periplasmic proteins containing methionine sulfoxide residues (Met-O), using respiratory chain electrons. Thus protects these proteins from oxidative-stress damage caused by reactive species of oxygen and chlorine generated by the host defense mechanisms. MsrPQ is essential for the maintenance of envelope integrity under bleach stress, rescuing a wide series of structurally unrelated periplasmic proteins from methionine oxidation, including the primary periplasmic chaperone SurA and the lipoprotein Pal. MsrQ provides electrons for reduction to the reductase catalytic subunit MsrP, using the quinone pool of the respiratory chain.</text>
</comment>
<comment type="cofactor">
    <cofactor evidence="1">
        <name>FMN</name>
        <dbReference type="ChEBI" id="CHEBI:58210"/>
    </cofactor>
    <text evidence="1">Binds 1 FMN per subunit.</text>
</comment>
<comment type="cofactor">
    <cofactor evidence="1">
        <name>heme b</name>
        <dbReference type="ChEBI" id="CHEBI:60344"/>
    </cofactor>
    <text evidence="1">Binds 1 heme b (iron(II)-protoporphyrin IX) group per subunit.</text>
</comment>
<comment type="subunit">
    <text evidence="1">Heterodimer of a catalytic subunit (MsrP) and a heme-binding subunit (MsrQ).</text>
</comment>
<comment type="subcellular location">
    <subcellularLocation>
        <location evidence="1">Cell inner membrane</location>
        <topology evidence="1">Multi-pass membrane protein</topology>
    </subcellularLocation>
</comment>
<comment type="similarity">
    <text evidence="1">Belongs to the MsrQ family.</text>
</comment>
<gene>
    <name evidence="1" type="primary">msrQ</name>
    <name type="ordered locus">EcHS_A2073</name>
</gene>
<sequence>MRLTAKQVTWLKVSLHLAGLLPFLWLVWAINHGGLGADPVKDIQHFTGRTALKFLLATLLITPLARYAKQPLLIRTRRLLGLWCFAWATLHLTSYALLELGVNNLALLGKELITRPYLTLGIISWVILLALAFTSTQAMQRKLGKHWQQLHNFVYLVAILAPIHYLWSVKIISPQPLIYAGLAVLLLALRYKKLRSLFNRLRKQVHNKLSV</sequence>
<protein>
    <recommendedName>
        <fullName evidence="1">Protein-methionine-sulfoxide reductase heme-binding subunit MsrQ</fullName>
    </recommendedName>
    <alternativeName>
        <fullName evidence="1">Flavocytochrome MsrQ</fullName>
    </alternativeName>
</protein>
<evidence type="ECO:0000255" key="1">
    <source>
        <dbReference type="HAMAP-Rule" id="MF_01207"/>
    </source>
</evidence>